<proteinExistence type="inferred from homology"/>
<sequence>MKILVVGTGAREHAICSALADEATIYSVMGNRNPGISRLAGNSLLLLKLTPKVVRFASEKGVDMAFIGPEAHLEAGLVDALEEAGIPSVGPTRDAARIETDKSFMRKLFEDYRIPGSITYRVFSDPEELREFMEDFDSEAVVKPVGLTGGKGVKIVGEHLRDNMEALKYATEVIEKRIGGHPSVVIEERVVGEEFTVQAFSDGEHIVPMPAVQDHPHAYEGDQGPITGGMGSYSDSDGLLPFLTQKDYEDAVEIMQRTVDAIRKETGPYRGILYGQFMLSADGPKLIEYNARFGDPEAMNVLPLLESSMLEICEGIVDGNLKSASFMNLATVCKYLVPEGYPESGVAGAEIKVDEKKIEDMGVITYYAAVNQEDDHIYTSSSRALALVAPADDIYSAEELCEEATAHVKGRLYHRRDIGTRELVEKRIKHMEDLRS</sequence>
<gene>
    <name evidence="2" type="primary">purD</name>
    <name type="ordered locus">MTH_1445</name>
</gene>
<evidence type="ECO:0000250" key="1"/>
<evidence type="ECO:0000255" key="2">
    <source>
        <dbReference type="HAMAP-Rule" id="MF_00138"/>
    </source>
</evidence>
<evidence type="ECO:0000305" key="3"/>
<feature type="chain" id="PRO_0000151513" description="Phosphoribosylamine--glycine ligase">
    <location>
        <begin position="1"/>
        <end position="436"/>
    </location>
</feature>
<feature type="domain" description="ATP-grasp" evidence="2">
    <location>
        <begin position="106"/>
        <end position="318"/>
    </location>
</feature>
<feature type="binding site" evidence="2">
    <location>
        <begin position="133"/>
        <end position="196"/>
    </location>
    <ligand>
        <name>ATP</name>
        <dbReference type="ChEBI" id="CHEBI:30616"/>
    </ligand>
</feature>
<feature type="binding site" evidence="2">
    <location>
        <position position="276"/>
    </location>
    <ligand>
        <name>Mg(2+)</name>
        <dbReference type="ChEBI" id="CHEBI:18420"/>
        <label>1</label>
    </ligand>
</feature>
<feature type="binding site" evidence="2">
    <location>
        <position position="276"/>
    </location>
    <ligand>
        <name>Mn(2+)</name>
        <dbReference type="ChEBI" id="CHEBI:29035"/>
        <label>1</label>
    </ligand>
</feature>
<feature type="binding site" evidence="2">
    <location>
        <position position="288"/>
    </location>
    <ligand>
        <name>Mg(2+)</name>
        <dbReference type="ChEBI" id="CHEBI:18420"/>
        <label>1</label>
    </ligand>
</feature>
<feature type="binding site" evidence="2">
    <location>
        <position position="288"/>
    </location>
    <ligand>
        <name>Mg(2+)</name>
        <dbReference type="ChEBI" id="CHEBI:18420"/>
        <label>2</label>
    </ligand>
</feature>
<feature type="binding site" evidence="2">
    <location>
        <position position="288"/>
    </location>
    <ligand>
        <name>Mn(2+)</name>
        <dbReference type="ChEBI" id="CHEBI:29035"/>
        <label>1</label>
    </ligand>
</feature>
<feature type="binding site" evidence="2">
    <location>
        <position position="288"/>
    </location>
    <ligand>
        <name>Mn(2+)</name>
        <dbReference type="ChEBI" id="CHEBI:29035"/>
        <label>2</label>
    </ligand>
</feature>
<feature type="binding site" evidence="2">
    <location>
        <position position="290"/>
    </location>
    <ligand>
        <name>Mg(2+)</name>
        <dbReference type="ChEBI" id="CHEBI:18420"/>
        <label>2</label>
    </ligand>
</feature>
<feature type="binding site" evidence="2">
    <location>
        <position position="290"/>
    </location>
    <ligand>
        <name>Mn(2+)</name>
        <dbReference type="ChEBI" id="CHEBI:29035"/>
        <label>2</label>
    </ligand>
</feature>
<protein>
    <recommendedName>
        <fullName evidence="2">Phosphoribosylamine--glycine ligase</fullName>
        <ecNumber evidence="2">6.3.4.13</ecNumber>
    </recommendedName>
    <alternativeName>
        <fullName evidence="2">GARS</fullName>
    </alternativeName>
    <alternativeName>
        <fullName evidence="2">Glycinamide ribonucleotide synthetase</fullName>
    </alternativeName>
    <alternativeName>
        <fullName evidence="2">Phosphoribosylglycinamide synthetase</fullName>
    </alternativeName>
</protein>
<reference key="1">
    <citation type="journal article" date="1997" name="J. Bacteriol.">
        <title>Complete genome sequence of Methanobacterium thermoautotrophicum deltaH: functional analysis and comparative genomics.</title>
        <authorList>
            <person name="Smith D.R."/>
            <person name="Doucette-Stamm L.A."/>
            <person name="Deloughery C."/>
            <person name="Lee H.-M."/>
            <person name="Dubois J."/>
            <person name="Aldredge T."/>
            <person name="Bashirzadeh R."/>
            <person name="Blakely D."/>
            <person name="Cook R."/>
            <person name="Gilbert K."/>
            <person name="Harrison D."/>
            <person name="Hoang L."/>
            <person name="Keagle P."/>
            <person name="Lumm W."/>
            <person name="Pothier B."/>
            <person name="Qiu D."/>
            <person name="Spadafora R."/>
            <person name="Vicare R."/>
            <person name="Wang Y."/>
            <person name="Wierzbowski J."/>
            <person name="Gibson R."/>
            <person name="Jiwani N."/>
            <person name="Caruso A."/>
            <person name="Bush D."/>
            <person name="Safer H."/>
            <person name="Patwell D."/>
            <person name="Prabhakar S."/>
            <person name="McDougall S."/>
            <person name="Shimer G."/>
            <person name="Goyal A."/>
            <person name="Pietrovski S."/>
            <person name="Church G.M."/>
            <person name="Daniels C.J."/>
            <person name="Mao J.-I."/>
            <person name="Rice P."/>
            <person name="Noelling J."/>
            <person name="Reeve J.N."/>
        </authorList>
    </citation>
    <scope>NUCLEOTIDE SEQUENCE [LARGE SCALE GENOMIC DNA]</scope>
    <source>
        <strain>ATCC 29096 / DSM 1053 / JCM 10044 / NBRC 100330 / Delta H</strain>
    </source>
</reference>
<keyword id="KW-0067">ATP-binding</keyword>
<keyword id="KW-0436">Ligase</keyword>
<keyword id="KW-0460">Magnesium</keyword>
<keyword id="KW-0464">Manganese</keyword>
<keyword id="KW-0479">Metal-binding</keyword>
<keyword id="KW-0547">Nucleotide-binding</keyword>
<keyword id="KW-0658">Purine biosynthesis</keyword>
<keyword id="KW-1185">Reference proteome</keyword>
<dbReference type="EC" id="6.3.4.13" evidence="2"/>
<dbReference type="EMBL" id="AE000666">
    <property type="protein sequence ID" value="AAB85920.1"/>
    <property type="status" value="ALT_INIT"/>
    <property type="molecule type" value="Genomic_DNA"/>
</dbReference>
<dbReference type="PIR" id="D69059">
    <property type="entry name" value="D69059"/>
</dbReference>
<dbReference type="RefSeq" id="WP_048061056.1">
    <property type="nucleotide sequence ID" value="NC_000916.1"/>
</dbReference>
<dbReference type="SMR" id="O27494"/>
<dbReference type="FunCoup" id="O27494">
    <property type="interactions" value="94"/>
</dbReference>
<dbReference type="STRING" id="187420.MTH_1445"/>
<dbReference type="PaxDb" id="187420-MTH_1445"/>
<dbReference type="EnsemblBacteria" id="AAB85920">
    <property type="protein sequence ID" value="AAB85920"/>
    <property type="gene ID" value="MTH_1445"/>
</dbReference>
<dbReference type="GeneID" id="1471714"/>
<dbReference type="KEGG" id="mth:MTH_1445"/>
<dbReference type="PATRIC" id="fig|187420.15.peg.1407"/>
<dbReference type="HOGENOM" id="CLU_027420_3_0_2"/>
<dbReference type="InParanoid" id="O27494"/>
<dbReference type="UniPathway" id="UPA00074">
    <property type="reaction ID" value="UER00125"/>
</dbReference>
<dbReference type="Proteomes" id="UP000005223">
    <property type="component" value="Chromosome"/>
</dbReference>
<dbReference type="GO" id="GO:0005524">
    <property type="term" value="F:ATP binding"/>
    <property type="evidence" value="ECO:0007669"/>
    <property type="project" value="UniProtKB-KW"/>
</dbReference>
<dbReference type="GO" id="GO:0046872">
    <property type="term" value="F:metal ion binding"/>
    <property type="evidence" value="ECO:0007669"/>
    <property type="project" value="UniProtKB-KW"/>
</dbReference>
<dbReference type="GO" id="GO:0004637">
    <property type="term" value="F:phosphoribosylamine-glycine ligase activity"/>
    <property type="evidence" value="ECO:0007669"/>
    <property type="project" value="UniProtKB-UniRule"/>
</dbReference>
<dbReference type="GO" id="GO:0006189">
    <property type="term" value="P:'de novo' IMP biosynthetic process"/>
    <property type="evidence" value="ECO:0007669"/>
    <property type="project" value="UniProtKB-UniRule"/>
</dbReference>
<dbReference type="GO" id="GO:0009113">
    <property type="term" value="P:purine nucleobase biosynthetic process"/>
    <property type="evidence" value="ECO:0007669"/>
    <property type="project" value="InterPro"/>
</dbReference>
<dbReference type="Gene3D" id="3.40.50.20">
    <property type="match status" value="1"/>
</dbReference>
<dbReference type="Gene3D" id="3.30.1490.20">
    <property type="entry name" value="ATP-grasp fold, A domain"/>
    <property type="match status" value="1"/>
</dbReference>
<dbReference type="Gene3D" id="3.30.470.20">
    <property type="entry name" value="ATP-grasp fold, B domain"/>
    <property type="match status" value="1"/>
</dbReference>
<dbReference type="Gene3D" id="3.90.600.10">
    <property type="entry name" value="Phosphoribosylglycinamide synthetase, C-terminal domain"/>
    <property type="match status" value="1"/>
</dbReference>
<dbReference type="HAMAP" id="MF_00138">
    <property type="entry name" value="GARS"/>
    <property type="match status" value="1"/>
</dbReference>
<dbReference type="InterPro" id="IPR011761">
    <property type="entry name" value="ATP-grasp"/>
</dbReference>
<dbReference type="InterPro" id="IPR013815">
    <property type="entry name" value="ATP_grasp_subdomain_1"/>
</dbReference>
<dbReference type="InterPro" id="IPR016185">
    <property type="entry name" value="PreATP-grasp_dom_sf"/>
</dbReference>
<dbReference type="InterPro" id="IPR020561">
    <property type="entry name" value="PRibGlycinamid_synth_ATP-grasp"/>
</dbReference>
<dbReference type="InterPro" id="IPR000115">
    <property type="entry name" value="PRibGlycinamide_synth"/>
</dbReference>
<dbReference type="InterPro" id="IPR020560">
    <property type="entry name" value="PRibGlycinamide_synth_C-dom"/>
</dbReference>
<dbReference type="InterPro" id="IPR037123">
    <property type="entry name" value="PRibGlycinamide_synth_C_sf"/>
</dbReference>
<dbReference type="InterPro" id="IPR020559">
    <property type="entry name" value="PRibGlycinamide_synth_CS"/>
</dbReference>
<dbReference type="InterPro" id="IPR020562">
    <property type="entry name" value="PRibGlycinamide_synth_N"/>
</dbReference>
<dbReference type="InterPro" id="IPR011054">
    <property type="entry name" value="Rudment_hybrid_motif"/>
</dbReference>
<dbReference type="NCBIfam" id="TIGR00877">
    <property type="entry name" value="purD"/>
    <property type="match status" value="1"/>
</dbReference>
<dbReference type="PANTHER" id="PTHR43472">
    <property type="entry name" value="PHOSPHORIBOSYLAMINE--GLYCINE LIGASE"/>
    <property type="match status" value="1"/>
</dbReference>
<dbReference type="PANTHER" id="PTHR43472:SF1">
    <property type="entry name" value="PHOSPHORIBOSYLAMINE--GLYCINE LIGASE, CHLOROPLASTIC"/>
    <property type="match status" value="1"/>
</dbReference>
<dbReference type="Pfam" id="PF01071">
    <property type="entry name" value="GARS_A"/>
    <property type="match status" value="1"/>
</dbReference>
<dbReference type="Pfam" id="PF02843">
    <property type="entry name" value="GARS_C"/>
    <property type="match status" value="1"/>
</dbReference>
<dbReference type="Pfam" id="PF02844">
    <property type="entry name" value="GARS_N"/>
    <property type="match status" value="1"/>
</dbReference>
<dbReference type="SMART" id="SM01209">
    <property type="entry name" value="GARS_A"/>
    <property type="match status" value="1"/>
</dbReference>
<dbReference type="SMART" id="SM01210">
    <property type="entry name" value="GARS_C"/>
    <property type="match status" value="1"/>
</dbReference>
<dbReference type="SUPFAM" id="SSF56059">
    <property type="entry name" value="Glutathione synthetase ATP-binding domain-like"/>
    <property type="match status" value="1"/>
</dbReference>
<dbReference type="SUPFAM" id="SSF52440">
    <property type="entry name" value="PreATP-grasp domain"/>
    <property type="match status" value="1"/>
</dbReference>
<dbReference type="SUPFAM" id="SSF51246">
    <property type="entry name" value="Rudiment single hybrid motif"/>
    <property type="match status" value="1"/>
</dbReference>
<dbReference type="PROSITE" id="PS50975">
    <property type="entry name" value="ATP_GRASP"/>
    <property type="match status" value="1"/>
</dbReference>
<dbReference type="PROSITE" id="PS00184">
    <property type="entry name" value="GARS"/>
    <property type="match status" value="1"/>
</dbReference>
<comment type="catalytic activity">
    <reaction evidence="2">
        <text>5-phospho-beta-D-ribosylamine + glycine + ATP = N(1)-(5-phospho-beta-D-ribosyl)glycinamide + ADP + phosphate + H(+)</text>
        <dbReference type="Rhea" id="RHEA:17453"/>
        <dbReference type="ChEBI" id="CHEBI:15378"/>
        <dbReference type="ChEBI" id="CHEBI:30616"/>
        <dbReference type="ChEBI" id="CHEBI:43474"/>
        <dbReference type="ChEBI" id="CHEBI:57305"/>
        <dbReference type="ChEBI" id="CHEBI:58681"/>
        <dbReference type="ChEBI" id="CHEBI:143788"/>
        <dbReference type="ChEBI" id="CHEBI:456216"/>
        <dbReference type="EC" id="6.3.4.13"/>
    </reaction>
</comment>
<comment type="cofactor">
    <cofactor evidence="1">
        <name>Mg(2+)</name>
        <dbReference type="ChEBI" id="CHEBI:18420"/>
    </cofactor>
    <cofactor evidence="1">
        <name>Mn(2+)</name>
        <dbReference type="ChEBI" id="CHEBI:29035"/>
    </cofactor>
    <text evidence="1">Binds 2 magnesium or manganese ions per subunit.</text>
</comment>
<comment type="pathway">
    <text evidence="2">Purine metabolism; IMP biosynthesis via de novo pathway; N(1)-(5-phospho-D-ribosyl)glycinamide from 5-phospho-alpha-D-ribose 1-diphosphate: step 2/2.</text>
</comment>
<comment type="similarity">
    <text evidence="2">Belongs to the GARS family.</text>
</comment>
<comment type="sequence caution" evidence="3">
    <conflict type="erroneous initiation">
        <sequence resource="EMBL-CDS" id="AAB85920"/>
    </conflict>
</comment>
<accession>O27494</accession>
<organism>
    <name type="scientific">Methanothermobacter thermautotrophicus (strain ATCC 29096 / DSM 1053 / JCM 10044 / NBRC 100330 / Delta H)</name>
    <name type="common">Methanobacterium thermoautotrophicum</name>
    <dbReference type="NCBI Taxonomy" id="187420"/>
    <lineage>
        <taxon>Archaea</taxon>
        <taxon>Methanobacteriati</taxon>
        <taxon>Methanobacteriota</taxon>
        <taxon>Methanomada group</taxon>
        <taxon>Methanobacteria</taxon>
        <taxon>Methanobacteriales</taxon>
        <taxon>Methanobacteriaceae</taxon>
        <taxon>Methanothermobacter</taxon>
    </lineage>
</organism>
<name>PUR2_METTH</name>